<feature type="chain" id="PRO_0000458496" description="N-methyltranferase dbiM" evidence="1">
    <location>
        <begin position="1"/>
        <end position="399"/>
    </location>
</feature>
<feature type="peptide" id="PRO_0000458497" description="Ribosomally synthesized cyclic peptide dendrothelin core peptide" evidence="1">
    <location>
        <begin position="400"/>
        <end position="411"/>
    </location>
</feature>
<feature type="peptide" id="PRO_0000458498" description="Follower peptide" evidence="1">
    <location>
        <begin position="412"/>
        <end position="417"/>
    </location>
</feature>
<feature type="region of interest" description="Methyltransferase domain" evidence="1">
    <location>
        <begin position="1"/>
        <end position="251"/>
    </location>
</feature>
<feature type="region of interest" description="Clasp domain" evidence="1">
    <location>
        <begin position="252"/>
        <end position="378"/>
    </location>
</feature>
<feature type="region of interest" description="Precursor leader" evidence="1">
    <location>
        <begin position="379"/>
        <end position="399"/>
    </location>
</feature>
<feature type="active site" evidence="1">
    <location>
        <position position="72"/>
    </location>
</feature>
<feature type="active site" evidence="1">
    <location>
        <position position="76"/>
    </location>
</feature>
<feature type="active site" evidence="1">
    <location>
        <position position="98"/>
    </location>
</feature>
<feature type="binding site" evidence="1">
    <location>
        <position position="98"/>
    </location>
    <ligand>
        <name>S-adenosyl-L-methionine</name>
        <dbReference type="ChEBI" id="CHEBI:59789"/>
    </ligand>
</feature>
<feature type="binding site" evidence="2 8 9">
    <location>
        <position position="100"/>
    </location>
    <ligand>
        <name>S-adenosyl-L-methionine</name>
        <dbReference type="ChEBI" id="CHEBI:59789"/>
    </ligand>
</feature>
<feature type="binding site" evidence="2 8">
    <location>
        <position position="103"/>
    </location>
    <ligand>
        <name>S-adenosyl-L-methionine</name>
        <dbReference type="ChEBI" id="CHEBI:59789"/>
    </ligand>
</feature>
<feature type="binding site" evidence="2 8 9">
    <location>
        <position position="130"/>
    </location>
    <ligand>
        <name>S-adenosyl-L-methionine</name>
        <dbReference type="ChEBI" id="CHEBI:59789"/>
    </ligand>
</feature>
<feature type="binding site" evidence="2 8 9">
    <location>
        <position position="172"/>
    </location>
    <ligand>
        <name>S-adenosyl-L-methionine</name>
        <dbReference type="ChEBI" id="CHEBI:59789"/>
    </ligand>
</feature>
<feature type="binding site" evidence="2 8 9">
    <location>
        <position position="213"/>
    </location>
    <ligand>
        <name>S-adenosyl-L-methionine</name>
        <dbReference type="ChEBI" id="CHEBI:59789"/>
    </ligand>
</feature>
<feature type="binding site" evidence="2 8">
    <location>
        <position position="244"/>
    </location>
    <ligand>
        <name>S-adenosyl-L-methionine</name>
        <dbReference type="ChEBI" id="CHEBI:59789"/>
    </ligand>
</feature>
<feature type="binding site" evidence="2 8 9">
    <location>
        <position position="245"/>
    </location>
    <ligand>
        <name>S-adenosyl-L-methionine</name>
        <dbReference type="ChEBI" id="CHEBI:59789"/>
    </ligand>
</feature>
<feature type="modified residue" description="N-methylvaline" evidence="3">
    <location>
        <position position="401"/>
    </location>
</feature>
<feature type="modified residue" description="N-methylvaline" evidence="3">
    <location>
        <position position="403"/>
    </location>
</feature>
<feature type="modified residue" description="N-methylthreonine" evidence="3">
    <location>
        <position position="404"/>
    </location>
</feature>
<feature type="modified residue" description="N-methylglycine" evidence="3">
    <location>
        <position position="405"/>
    </location>
</feature>
<feature type="modified residue" description="N-methylisoleucine" evidence="3">
    <location>
        <position position="406"/>
    </location>
</feature>
<feature type="modified residue" description="N-methylvaline" evidence="3">
    <location>
        <position position="407"/>
    </location>
</feature>
<feature type="modified residue" description="N-methylglycine" evidence="3">
    <location>
        <position position="408"/>
    </location>
</feature>
<feature type="modified residue" description="N-methylisoleucine" evidence="3">
    <location>
        <position position="410"/>
    </location>
</feature>
<feature type="modified residue" description="N-methylglycine" evidence="3">
    <location>
        <position position="411"/>
    </location>
</feature>
<feature type="modified residue" description="N-methylvaline" evidence="3">
    <location>
        <position position="413"/>
    </location>
</feature>
<feature type="strand" evidence="10">
    <location>
        <begin position="11"/>
        <end position="16"/>
    </location>
</feature>
<feature type="strand" evidence="10">
    <location>
        <begin position="18"/>
        <end position="20"/>
    </location>
</feature>
<feature type="turn" evidence="10">
    <location>
        <begin position="21"/>
        <end position="24"/>
    </location>
</feature>
<feature type="helix" evidence="10">
    <location>
        <begin position="27"/>
        <end position="35"/>
    </location>
</feature>
<feature type="strand" evidence="10">
    <location>
        <begin position="37"/>
        <end position="42"/>
    </location>
</feature>
<feature type="helix" evidence="10">
    <location>
        <begin position="46"/>
        <end position="55"/>
    </location>
</feature>
<feature type="strand" evidence="10">
    <location>
        <begin position="57"/>
        <end position="61"/>
    </location>
</feature>
<feature type="helix" evidence="10">
    <location>
        <begin position="62"/>
        <end position="65"/>
    </location>
</feature>
<feature type="helix" evidence="10">
    <location>
        <begin position="72"/>
        <end position="88"/>
    </location>
</feature>
<feature type="strand" evidence="10">
    <location>
        <begin position="92"/>
        <end position="100"/>
    </location>
</feature>
<feature type="helix" evidence="10">
    <location>
        <begin position="106"/>
        <end position="117"/>
    </location>
</feature>
<feature type="strand" evidence="10">
    <location>
        <begin position="121"/>
        <end position="124"/>
    </location>
</feature>
<feature type="helix" evidence="10">
    <location>
        <begin position="130"/>
        <end position="137"/>
    </location>
</feature>
<feature type="turn" evidence="10">
    <location>
        <begin position="142"/>
        <end position="145"/>
    </location>
</feature>
<feature type="strand" evidence="10">
    <location>
        <begin position="147"/>
        <end position="151"/>
    </location>
</feature>
<feature type="helix" evidence="10">
    <location>
        <begin position="152"/>
        <end position="157"/>
    </location>
</feature>
<feature type="strand" evidence="10">
    <location>
        <begin position="166"/>
        <end position="171"/>
    </location>
</feature>
<feature type="helix" evidence="10">
    <location>
        <begin position="173"/>
        <end position="175"/>
    </location>
</feature>
<feature type="helix" evidence="10">
    <location>
        <begin position="191"/>
        <end position="202"/>
    </location>
</feature>
<feature type="strand" evidence="10">
    <location>
        <begin position="206"/>
        <end position="212"/>
    </location>
</feature>
<feature type="strand" evidence="10">
    <location>
        <begin position="222"/>
        <end position="227"/>
    </location>
</feature>
<feature type="helix" evidence="10">
    <location>
        <begin position="228"/>
        <end position="232"/>
    </location>
</feature>
<feature type="helix" evidence="10">
    <location>
        <begin position="234"/>
        <end position="237"/>
    </location>
</feature>
<feature type="strand" evidence="10">
    <location>
        <begin position="245"/>
        <end position="248"/>
    </location>
</feature>
<feature type="helix" evidence="10">
    <location>
        <begin position="258"/>
        <end position="264"/>
    </location>
</feature>
<feature type="helix" evidence="10">
    <location>
        <begin position="297"/>
        <end position="308"/>
    </location>
</feature>
<feature type="helix" evidence="10">
    <location>
        <begin position="322"/>
        <end position="333"/>
    </location>
</feature>
<feature type="helix" evidence="10">
    <location>
        <begin position="335"/>
        <end position="343"/>
    </location>
</feature>
<feature type="helix" evidence="10">
    <location>
        <begin position="345"/>
        <end position="351"/>
    </location>
</feature>
<feature type="helix" evidence="10">
    <location>
        <begin position="357"/>
        <end position="365"/>
    </location>
</feature>
<feature type="helix" evidence="10">
    <location>
        <begin position="368"/>
        <end position="374"/>
    </location>
</feature>
<feature type="helix" evidence="10">
    <location>
        <begin position="382"/>
        <end position="385"/>
    </location>
</feature>
<proteinExistence type="evidence at protein level"/>
<keyword id="KW-0002">3D-structure</keyword>
<keyword id="KW-0488">Methylation</keyword>
<keyword id="KW-0489">Methyltransferase</keyword>
<keyword id="KW-1185">Reference proteome</keyword>
<keyword id="KW-0949">S-adenosyl-L-methionine</keyword>
<keyword id="KW-0808">Transferase</keyword>
<keyword id="KW-0843">Virulence</keyword>
<name>DBIMA_DENBC</name>
<comment type="function">
    <text evidence="2 3">Fusion protein of the methyltransferase dbiM and the dendrothelin core peptide; part of the gene cluster that mediates the biosynthesis of dendrothelin A, a highly methylated cyclic dodecapeptide showing slight nematodicidal activity (PubMed:30204409, PubMed:33574430). Dendrothelin A derives from the C-terminus of the dbiMA protein, and it is the dbiMA protein that methylates its own C-terminus using S-adenosyl methionine (SAM) (PubMed:30204409, PubMed:33574430). The C-terminus is subsequently cleaved off and macrocyclized by the prolyloligopeptidase dbiP to give the final product (PubMed:30204409, PubMed:33574430).</text>
</comment>
<comment type="pathway">
    <text evidence="2 3">Mycotoxin biosynthesis.</text>
</comment>
<comment type="subunit">
    <text evidence="2">Homodimer.</text>
</comment>
<comment type="domain">
    <text evidence="1">Within the homodimer, the clasp domain wraps around the adjacent subunit to position the core peptide into the other subunit's active site for iterative intermolecular methylation.</text>
</comment>
<comment type="PTM">
    <text evidence="2 3 6">DbiMA automethylates at Val-401, Val-403, Thr-404, Gly-405, Ile-406, Val-407, Gly-408, Ile-410, Gly-411 and Val-413 before being processed by the prolyloligopeptidase dbiP which likely forms a peptidyl ester upon removal of the follower propeptide, which then undergoes macrocyclization with the N-terminus of the modified core peptide (PubMed:30204409, PubMed:33574430). Peptide backbone alpha-N-methylations change the physicochemical properties of amide bonds to provide structural constraints and other favorable characteristics including biological membrane permeability to peptides (Probable).</text>
</comment>
<comment type="biotechnology">
    <text evidence="3">Dendrothelin A displays slight activity against the plant-pathogenic nematode Meloidogyne incognita.</text>
</comment>
<comment type="similarity">
    <text evidence="6">In the N-terminal section; belongs to the precorrin methyltransferase family.</text>
</comment>
<accession>A0A4S8L4Q5</accession>
<accession>A0A452CSY8</accession>
<accession>A0A452CSY9</accession>
<reference key="1">
    <citation type="journal article" date="2019" name="Nat. Ecol. Evol.">
        <title>Megaphylogeny resolves global patterns of mushroom evolution.</title>
        <authorList>
            <person name="Varga T."/>
            <person name="Krizsan K."/>
            <person name="Foeldi C."/>
            <person name="Dima B."/>
            <person name="Sanchez-Garcia M."/>
            <person name="Sanchez-Ramirez S."/>
            <person name="Szoellosi G.J."/>
            <person name="Szarkandi J.G."/>
            <person name="Papp V."/>
            <person name="Albert L."/>
            <person name="Andreopoulos W."/>
            <person name="Angelini C."/>
            <person name="Antonin V."/>
            <person name="Barry K.W."/>
            <person name="Bougher N.L."/>
            <person name="Buchanan P."/>
            <person name="Buyck B."/>
            <person name="Bense V."/>
            <person name="Catcheside P."/>
            <person name="Chovatia M."/>
            <person name="Cooper J."/>
            <person name="Daemon W."/>
            <person name="Desjardin D."/>
            <person name="Finy P."/>
            <person name="Geml J."/>
            <person name="Haridas S."/>
            <person name="Hughes K."/>
            <person name="Justo A."/>
            <person name="Karasinski D."/>
            <person name="Kautmanova I."/>
            <person name="Kiss B."/>
            <person name="Kocsube S."/>
            <person name="Kotiranta H."/>
            <person name="LaButti K.M."/>
            <person name="Lechner B.E."/>
            <person name="Liimatainen K."/>
            <person name="Lipzen A."/>
            <person name="Lukacs Z."/>
            <person name="Mihaltcheva S."/>
            <person name="Morgado L.N."/>
            <person name="Niskanen T."/>
            <person name="Noordeloos M.E."/>
            <person name="Ohm R.A."/>
            <person name="Ortiz-Santana B."/>
            <person name="Ovrebo C."/>
            <person name="Racz N."/>
            <person name="Riley R."/>
            <person name="Savchenko A."/>
            <person name="Shiryaev A."/>
            <person name="Soop K."/>
            <person name="Spirin V."/>
            <person name="Szebenyi C."/>
            <person name="Tomsovsky M."/>
            <person name="Tulloss R.E."/>
            <person name="Uehling J."/>
            <person name="Grigoriev I.V."/>
            <person name="Vagvoelgyi C."/>
            <person name="Papp T."/>
            <person name="Martin F.M."/>
            <person name="Miettinen O."/>
            <person name="Hibbett D.S."/>
            <person name="Nagy L.G."/>
        </authorList>
    </citation>
    <scope>NUCLEOTIDE SEQUENCE [LARGE SCALE GENOMIC DNA]</scope>
    <source>
        <strain>CBS 962.96</strain>
    </source>
</reference>
<reference key="2">
    <citation type="journal article" date="2021" name="Sci. Rep.">
        <title>Identification, heterologous production and bioactivity of lentinulin A and dendrothelin A, two natural variants of backbone N-methylated peptide macrocycle omphalotin A.</title>
        <authorList>
            <person name="Matabaro E."/>
            <person name="Kaspar H."/>
            <person name="Dahlin P."/>
            <person name="Bader D.L.V."/>
            <person name="Murar C.E."/>
            <person name="Staubli F."/>
            <person name="Field C.M."/>
            <person name="Bode J.W."/>
            <person name="Kuenzler M."/>
        </authorList>
    </citation>
    <scope>FUNCTION</scope>
    <scope>CATALYTIC ACTIVITY</scope>
    <scope>PATHWAY</scope>
    <scope>METHYLATION AT VAL-401; VAL-403; THR-404; GLY-405; ILE-406; VAL-407; GLY-408; ILE-410; GLY-411 AND VAL-413</scope>
    <scope>BIOTECHNOLOGY</scope>
</reference>
<reference key="3">
    <citation type="journal article" date="2022" name="Sci. Rep.">
        <title>Author Correction: Identification, heterologous production and bioactivity of lentinulin A and dendrothelin A, two natural variants of backbone N-methylated peptide macrocycle omphalotin A.</title>
        <authorList>
            <person name="Matabaro E."/>
            <person name="Kaspar H."/>
            <person name="Dahlin P."/>
            <person name="Bader D.L.V."/>
            <person name="Murar C.E."/>
            <person name="Staubli F."/>
            <person name="Field C.M."/>
            <person name="Bode J.W."/>
            <person name="Kuenzler M."/>
        </authorList>
    </citation>
    <scope>ERRATUM OF PUBMED:33574430</scope>
</reference>
<reference evidence="7 9" key="4">
    <citation type="journal article" date="2018" name="ACS Chem. Biol.">
        <title>Molecular basis for autocatalytic backbone N-methylation in RiPP natural product biosynthesis.</title>
        <authorList>
            <person name="Ongpipattanakul C."/>
            <person name="Nair S.K."/>
        </authorList>
    </citation>
    <scope>X-RAY CRYSTALLOGRAPHY (2.12 ANGSTROMS) IN COMPLEX WITH S-ADENOSYL METHIONINE</scope>
    <scope>SUBUNIT</scope>
    <scope>FUNCTION</scope>
    <scope>CATALYTIC ACTIVITY</scope>
    <scope>METHYLATION AT VAL-401; VAL-403; THR-404; GLY-405; ILE-406; VAL-407; GLY-408; ILE-410; GLY-411 AND VAL-413</scope>
    <scope>PATHWAY</scope>
    <source>
        <strain>CBS 962.96</strain>
    </source>
</reference>
<sequence length="417" mass="45850">MESSTQTKPGSLIVVGTGIESIGQMTLQALSYIEAASKVFYCVIDPATEAFILTKNKNCVDLYQYYDNGKSRMDTYTQMAELMLKEVRNGLDVVGVFYGHPGVFVNPSHRALAIARSEGYQARMLPGVSAEDCLFADLCIDPSNPGCLTYEASDFLIRERPVNVHSHLILFQVGCVGIADFNFSGFDNSKFTILVDRLEQEYGPDHTVVHYIAAMMPHQDPVTDKFTIGQLREPEIAKRVGGVSTFYIPPKARKDINTDIIRLLEFLPAGKVPDKHTQIYPPNQWEPDVPTLPPYGQNEQAAITRLEAHAPPEEYQPLATSKAMTDVMTKLALDPKALAEYKADHRAFAQSVPDLTPQERAALELGDSWAIRCAMKNMPSSLLEAASQSVEEASMNGFPWVIVTGIVGVIGSVVSSA</sequence>
<dbReference type="EC" id="2.1.1.-" evidence="2 3"/>
<dbReference type="EMBL" id="ML179655">
    <property type="protein sequence ID" value="THU83556.1"/>
    <property type="molecule type" value="Genomic_DNA"/>
</dbReference>
<dbReference type="PDB" id="6MJF">
    <property type="method" value="X-ray"/>
    <property type="resolution" value="2.20 A"/>
    <property type="chains" value="A/B/C/D/E/F=1-386"/>
</dbReference>
<dbReference type="PDB" id="6MJG">
    <property type="method" value="X-ray"/>
    <property type="resolution" value="2.12 A"/>
    <property type="chains" value="A=1-417"/>
</dbReference>
<dbReference type="PDBsum" id="6MJF"/>
<dbReference type="PDBsum" id="6MJG"/>
<dbReference type="SMR" id="A0A4S8L4Q5"/>
<dbReference type="iPTMnet" id="A0A4S8L4Q5"/>
<dbReference type="OrthoDB" id="4623364at2759"/>
<dbReference type="Proteomes" id="UP000297245">
    <property type="component" value="Unassembled WGS sequence"/>
</dbReference>
<dbReference type="GO" id="GO:0008168">
    <property type="term" value="F:methyltransferase activity"/>
    <property type="evidence" value="ECO:0007669"/>
    <property type="project" value="UniProtKB-KW"/>
</dbReference>
<dbReference type="GO" id="GO:0032259">
    <property type="term" value="P:methylation"/>
    <property type="evidence" value="ECO:0007669"/>
    <property type="project" value="UniProtKB-KW"/>
</dbReference>
<dbReference type="CDD" id="cd19916">
    <property type="entry name" value="OphMA_like"/>
    <property type="match status" value="1"/>
</dbReference>
<dbReference type="Gene3D" id="3.40.1010.10">
    <property type="entry name" value="Cobalt-precorrin-4 Transmethylase, Domain 1"/>
    <property type="match status" value="1"/>
</dbReference>
<dbReference type="InterPro" id="IPR000878">
    <property type="entry name" value="4pyrrol_Mease"/>
</dbReference>
<dbReference type="InterPro" id="IPR035996">
    <property type="entry name" value="4pyrrol_Methylase_sf"/>
</dbReference>
<dbReference type="InterPro" id="IPR014777">
    <property type="entry name" value="4pyrrole_Mease_sub1"/>
</dbReference>
<dbReference type="NCBIfam" id="NF038374">
    <property type="entry name" value="omphalotin_tail"/>
    <property type="match status" value="1"/>
</dbReference>
<dbReference type="Pfam" id="PF00590">
    <property type="entry name" value="TP_methylase"/>
    <property type="match status" value="1"/>
</dbReference>
<dbReference type="SUPFAM" id="SSF53790">
    <property type="entry name" value="Tetrapyrrole methylase"/>
    <property type="match status" value="1"/>
</dbReference>
<evidence type="ECO:0000250" key="1">
    <source>
        <dbReference type="UniProtKB" id="A0A2R2JFI5"/>
    </source>
</evidence>
<evidence type="ECO:0000269" key="2">
    <source>
    </source>
</evidence>
<evidence type="ECO:0000269" key="3">
    <source>
    </source>
</evidence>
<evidence type="ECO:0000303" key="4">
    <source>
    </source>
</evidence>
<evidence type="ECO:0000303" key="5">
    <source>
    </source>
</evidence>
<evidence type="ECO:0000305" key="6"/>
<evidence type="ECO:0000312" key="7">
    <source>
        <dbReference type="PDB" id="6MJF"/>
    </source>
</evidence>
<evidence type="ECO:0007744" key="8">
    <source>
        <dbReference type="PDB" id="6MJF"/>
    </source>
</evidence>
<evidence type="ECO:0007744" key="9">
    <source>
        <dbReference type="PDB" id="6MJG"/>
    </source>
</evidence>
<evidence type="ECO:0007829" key="10">
    <source>
        <dbReference type="PDB" id="6MJG"/>
    </source>
</evidence>
<protein>
    <recommendedName>
        <fullName evidence="5">Methyltransferase/ribosomally synthesized cyclic peptide dendrothelin A precursor dbihMA</fullName>
    </recommendedName>
    <alternativeName>
        <fullName evidence="5">Dendrothelin A biosynthesis cluster protein MA</fullName>
    </alternativeName>
    <component>
        <recommendedName>
            <fullName evidence="5">N-methyltranferase dbiM</fullName>
            <ecNumber evidence="2 3">2.1.1.-</ecNumber>
        </recommendedName>
    </component>
    <component>
        <recommendedName>
            <fullName evidence="5">Ribosomally synthesized cyclic peptide dendrothelin core peptide</fullName>
        </recommendedName>
    </component>
    <component>
        <recommendedName>
            <fullName evidence="1">Follower peptide</fullName>
        </recommendedName>
    </component>
</protein>
<organism>
    <name type="scientific">Dendrothele bispora (strain CBS 962.96)</name>
    <dbReference type="NCBI Taxonomy" id="1314807"/>
    <lineage>
        <taxon>Eukaryota</taxon>
        <taxon>Fungi</taxon>
        <taxon>Dikarya</taxon>
        <taxon>Basidiomycota</taxon>
        <taxon>Agaricomycotina</taxon>
        <taxon>Agaricomycetes</taxon>
        <taxon>Agaricomycetidae</taxon>
        <taxon>Agaricales</taxon>
        <taxon>Agaricales incertae sedis</taxon>
        <taxon>Dendrothele</taxon>
    </lineage>
</organism>
<gene>
    <name evidence="5" type="primary">dbiMA</name>
    <name evidence="4" type="synonym">dbophM</name>
    <name type="ORF">K435DRAFT_765759</name>
</gene>